<sequence length="86" mass="9226">MNYLVMISLALLFMIGVESARDGYIAQPNNCVYHCIPLSPGCDKLCRENGATSGKCSFLAGSGLACWCVALPDNVPIKIIGQKCTR</sequence>
<proteinExistence type="evidence at protein level"/>
<dbReference type="EMBL" id="AJ536597">
    <property type="protein sequence ID" value="CAD60541.1"/>
    <property type="molecule type" value="mRNA"/>
</dbReference>
<dbReference type="SMR" id="Q86SD9"/>
<dbReference type="GO" id="GO:0005576">
    <property type="term" value="C:extracellular region"/>
    <property type="evidence" value="ECO:0007669"/>
    <property type="project" value="UniProtKB-SubCell"/>
</dbReference>
<dbReference type="GO" id="GO:0019871">
    <property type="term" value="F:sodium channel inhibitor activity"/>
    <property type="evidence" value="ECO:0007669"/>
    <property type="project" value="InterPro"/>
</dbReference>
<dbReference type="GO" id="GO:0090729">
    <property type="term" value="F:toxin activity"/>
    <property type="evidence" value="ECO:0007669"/>
    <property type="project" value="UniProtKB-KW"/>
</dbReference>
<dbReference type="GO" id="GO:0006952">
    <property type="term" value="P:defense response"/>
    <property type="evidence" value="ECO:0007669"/>
    <property type="project" value="InterPro"/>
</dbReference>
<dbReference type="CDD" id="cd23106">
    <property type="entry name" value="neurotoxins_LC_scorpion"/>
    <property type="match status" value="1"/>
</dbReference>
<dbReference type="Gene3D" id="3.30.30.10">
    <property type="entry name" value="Knottin, scorpion toxin-like"/>
    <property type="match status" value="1"/>
</dbReference>
<dbReference type="InterPro" id="IPR044062">
    <property type="entry name" value="LCN-type_CS_alpha_beta_dom"/>
</dbReference>
<dbReference type="InterPro" id="IPR003614">
    <property type="entry name" value="Scorpion_toxin-like"/>
</dbReference>
<dbReference type="InterPro" id="IPR036574">
    <property type="entry name" value="Scorpion_toxin-like_sf"/>
</dbReference>
<dbReference type="InterPro" id="IPR018218">
    <property type="entry name" value="Scorpion_toxinL"/>
</dbReference>
<dbReference type="InterPro" id="IPR002061">
    <property type="entry name" value="Scorpion_toxinL/defensin"/>
</dbReference>
<dbReference type="Pfam" id="PF00537">
    <property type="entry name" value="Toxin_3"/>
    <property type="match status" value="1"/>
</dbReference>
<dbReference type="PRINTS" id="PR00285">
    <property type="entry name" value="SCORPNTOXIN"/>
</dbReference>
<dbReference type="SMART" id="SM00505">
    <property type="entry name" value="Knot1"/>
    <property type="match status" value="1"/>
</dbReference>
<dbReference type="SUPFAM" id="SSF57095">
    <property type="entry name" value="Scorpion toxin-like"/>
    <property type="match status" value="1"/>
</dbReference>
<dbReference type="PROSITE" id="PS51863">
    <property type="entry name" value="LCN_CSAB"/>
    <property type="match status" value="1"/>
</dbReference>
<protein>
    <recommendedName>
        <fullName>Toxin Aam3</fullName>
    </recommendedName>
    <alternativeName>
        <fullName>AamH3</fullName>
    </alternativeName>
    <alternativeName>
        <fullName>Alpha-neurotoxin 3</fullName>
    </alternativeName>
</protein>
<keyword id="KW-0903">Direct protein sequencing</keyword>
<keyword id="KW-1015">Disulfide bond</keyword>
<keyword id="KW-0872">Ion channel impairing toxin</keyword>
<keyword id="KW-0528">Neurotoxin</keyword>
<keyword id="KW-0964">Secreted</keyword>
<keyword id="KW-0732">Signal</keyword>
<keyword id="KW-0800">Toxin</keyword>
<keyword id="KW-0738">Voltage-gated sodium channel impairing toxin</keyword>
<reference key="1">
    <citation type="journal article" date="2003" name="Regul. Pept.">
        <title>Isolation of scorpion (Androctonus amoreuxi) putative alpha neurotoxins and parallel cloning of their respective cDNAs from a single sample of venom.</title>
        <authorList>
            <person name="Chen T."/>
            <person name="Folan R."/>
            <person name="Kwok H."/>
            <person name="O'Kane E.J."/>
            <person name="Bjourson A.J."/>
            <person name="Shaw C."/>
        </authorList>
    </citation>
    <scope>NUCLEOTIDE SEQUENCE [MRNA]</scope>
    <scope>PROTEIN SEQUENCE OF 20-85</scope>
    <source>
        <tissue>Venom</tissue>
        <tissue>Venom gland</tissue>
    </source>
</reference>
<organism>
    <name type="scientific">Androctonus amoreuxi</name>
    <name type="common">African fattail scorpion</name>
    <name type="synonym">Scorpio amoreuxi</name>
    <dbReference type="NCBI Taxonomy" id="112024"/>
    <lineage>
        <taxon>Eukaryota</taxon>
        <taxon>Metazoa</taxon>
        <taxon>Ecdysozoa</taxon>
        <taxon>Arthropoda</taxon>
        <taxon>Chelicerata</taxon>
        <taxon>Arachnida</taxon>
        <taxon>Scorpiones</taxon>
        <taxon>Buthida</taxon>
        <taxon>Buthoidea</taxon>
        <taxon>Buthidae</taxon>
        <taxon>Androctonus</taxon>
    </lineage>
</organism>
<name>SCX3_ANDAM</name>
<comment type="function">
    <text>Alpha toxins bind voltage-independently at site-3 of sodium channels (Nav) and inhibit the inactivation of the activated channels, thereby blocking neuronal transmission.</text>
</comment>
<comment type="subcellular location">
    <subcellularLocation>
        <location>Secreted</location>
    </subcellularLocation>
</comment>
<comment type="tissue specificity">
    <text>Expressed by the venom gland.</text>
</comment>
<comment type="domain">
    <text evidence="3">Has the structural arrangement of an alpha-helix connected to antiparallel beta-sheets by disulfide bonds (CS-alpha/beta).</text>
</comment>
<comment type="PTM">
    <text>The C-terminal basic residue is removed by a carboxypeptidase.</text>
</comment>
<comment type="similarity">
    <text evidence="3">Belongs to the long (4 C-C) scorpion toxin superfamily. Sodium channel inhibitor family. Alpha subfamily.</text>
</comment>
<accession>Q86SD9</accession>
<feature type="signal peptide" evidence="2">
    <location>
        <begin position="1"/>
        <end position="19"/>
    </location>
</feature>
<feature type="chain" id="PRO_0000035216" description="Toxin Aam3">
    <location>
        <begin position="20"/>
        <end position="85"/>
    </location>
</feature>
<feature type="domain" description="LCN-type CS-alpha/beta" evidence="1">
    <location>
        <begin position="21"/>
        <end position="85"/>
    </location>
</feature>
<feature type="disulfide bond" evidence="1">
    <location>
        <begin position="31"/>
        <end position="84"/>
    </location>
</feature>
<feature type="disulfide bond" evidence="1">
    <location>
        <begin position="35"/>
        <end position="56"/>
    </location>
</feature>
<feature type="disulfide bond" evidence="1">
    <location>
        <begin position="42"/>
        <end position="66"/>
    </location>
</feature>
<feature type="disulfide bond" evidence="1">
    <location>
        <begin position="46"/>
        <end position="68"/>
    </location>
</feature>
<evidence type="ECO:0000255" key="1">
    <source>
        <dbReference type="PROSITE-ProRule" id="PRU01210"/>
    </source>
</evidence>
<evidence type="ECO:0000269" key="2">
    <source>
    </source>
</evidence>
<evidence type="ECO:0000305" key="3"/>